<name>FOXO_DROME</name>
<evidence type="ECO:0000255" key="1">
    <source>
        <dbReference type="PROSITE-ProRule" id="PRU00089"/>
    </source>
</evidence>
<evidence type="ECO:0000256" key="2">
    <source>
        <dbReference type="SAM" id="MobiDB-lite"/>
    </source>
</evidence>
<evidence type="ECO:0000269" key="3">
    <source>
    </source>
</evidence>
<evidence type="ECO:0000269" key="4">
    <source>
    </source>
</evidence>
<evidence type="ECO:0000269" key="5">
    <source>
    </source>
</evidence>
<evidence type="ECO:0000269" key="6">
    <source>
    </source>
</evidence>
<evidence type="ECO:0000269" key="7">
    <source>
    </source>
</evidence>
<evidence type="ECO:0000269" key="8">
    <source>
    </source>
</evidence>
<evidence type="ECO:0000269" key="9">
    <source>
    </source>
</evidence>
<evidence type="ECO:0000269" key="10">
    <source>
    </source>
</evidence>
<evidence type="ECO:0000269" key="11">
    <source ref="2"/>
</evidence>
<evidence type="ECO:0000303" key="12">
    <source>
    </source>
</evidence>
<evidence type="ECO:0000303" key="13">
    <source>
    </source>
</evidence>
<evidence type="ECO:0000303" key="14">
    <source ref="2"/>
</evidence>
<evidence type="ECO:0000305" key="15"/>
<evidence type="ECO:0000312" key="16">
    <source>
        <dbReference type="EMBL" id="AAL09043.1"/>
    </source>
</evidence>
<evidence type="ECO:0000312" key="17">
    <source>
        <dbReference type="EMBL" id="AAL28078.1"/>
    </source>
</evidence>
<evidence type="ECO:0000312" key="18">
    <source>
        <dbReference type="EMBL" id="AAL90280.1"/>
    </source>
</evidence>
<evidence type="ECO:0000312" key="19">
    <source>
        <dbReference type="EMBL" id="AAS65147.1"/>
    </source>
</evidence>
<evidence type="ECO:0000312" key="20">
    <source>
        <dbReference type="EMBL" id="AAS65148.1"/>
    </source>
</evidence>
<gene>
    <name evidence="20" type="primary">foxo</name>
    <name type="synonym">Afx</name>
    <name type="ORF">CG3143</name>
</gene>
<dbReference type="EMBL" id="AF426831">
    <property type="protein sequence ID" value="AAL28078.1"/>
    <property type="molecule type" value="mRNA"/>
</dbReference>
<dbReference type="EMBL" id="AF416728">
    <property type="protein sequence ID" value="AAL09043.1"/>
    <property type="molecule type" value="mRNA"/>
</dbReference>
<dbReference type="EMBL" id="AE014297">
    <property type="protein sequence ID" value="AAF55012.2"/>
    <property type="molecule type" value="Genomic_DNA"/>
</dbReference>
<dbReference type="EMBL" id="AE014297">
    <property type="protein sequence ID" value="AAS65147.1"/>
    <property type="molecule type" value="Genomic_DNA"/>
</dbReference>
<dbReference type="EMBL" id="AE014297">
    <property type="protein sequence ID" value="AAS65148.1"/>
    <property type="molecule type" value="Genomic_DNA"/>
</dbReference>
<dbReference type="EMBL" id="AE014297">
    <property type="protein sequence ID" value="ACL83512.1"/>
    <property type="molecule type" value="Genomic_DNA"/>
</dbReference>
<dbReference type="EMBL" id="AY058718">
    <property type="protein sequence ID" value="AAL13947.1"/>
    <property type="status" value="ALT_INIT"/>
    <property type="molecule type" value="mRNA"/>
</dbReference>
<dbReference type="EMBL" id="AY089542">
    <property type="protein sequence ID" value="AAL90280.1"/>
    <property type="molecule type" value="mRNA"/>
</dbReference>
<dbReference type="RefSeq" id="NP_001262557.1">
    <property type="nucleotide sequence ID" value="NM_001275628.1"/>
</dbReference>
<dbReference type="RefSeq" id="NP_650330.3">
    <property type="nucleotide sequence ID" value="NM_142073.5"/>
</dbReference>
<dbReference type="RefSeq" id="NP_996204.1">
    <molecule id="Q95V55-1"/>
    <property type="nucleotide sequence ID" value="NM_206482.3"/>
</dbReference>
<dbReference type="RefSeq" id="NP_996205.1">
    <molecule id="Q95V55-1"/>
    <property type="nucleotide sequence ID" value="NM_206483.3"/>
</dbReference>
<dbReference type="SMR" id="Q95V55"/>
<dbReference type="BioGRID" id="66786">
    <property type="interactions" value="241"/>
</dbReference>
<dbReference type="FunCoup" id="Q95V55">
    <property type="interactions" value="348"/>
</dbReference>
<dbReference type="IntAct" id="Q95V55">
    <property type="interactions" value="60"/>
</dbReference>
<dbReference type="STRING" id="7227.FBpp0293589"/>
<dbReference type="GlyGen" id="Q95V55">
    <property type="glycosylation" value="1 site, 1 O-linked glycan (1 site)"/>
</dbReference>
<dbReference type="iPTMnet" id="Q95V55"/>
<dbReference type="PaxDb" id="7227-FBpp0293589"/>
<dbReference type="EnsemblMetazoa" id="FBtr0082886">
    <molecule id="Q95V55-1"/>
    <property type="protein sequence ID" value="FBpp0089343"/>
    <property type="gene ID" value="FBgn0038197"/>
</dbReference>
<dbReference type="EnsemblMetazoa" id="FBtr0082887">
    <molecule id="Q95V55-1"/>
    <property type="protein sequence ID" value="FBpp0089344"/>
    <property type="gene ID" value="FBgn0038197"/>
</dbReference>
<dbReference type="GeneID" id="41709"/>
<dbReference type="KEGG" id="dme:Dmel_CG3143"/>
<dbReference type="UCSC" id="CG3143-RA">
    <property type="organism name" value="d. melanogaster"/>
</dbReference>
<dbReference type="UCSC" id="CG3143-RB">
    <molecule id="Q95V55-1"/>
    <property type="organism name" value="d. melanogaster"/>
</dbReference>
<dbReference type="AGR" id="FB:FBgn0038197"/>
<dbReference type="CTD" id="41709"/>
<dbReference type="FlyBase" id="FBgn0038197">
    <property type="gene designation" value="foxo"/>
</dbReference>
<dbReference type="VEuPathDB" id="VectorBase:FBgn0038197"/>
<dbReference type="eggNOG" id="KOG2294">
    <property type="taxonomic scope" value="Eukaryota"/>
</dbReference>
<dbReference type="GeneTree" id="ENSGT00940000170843"/>
<dbReference type="InParanoid" id="Q95V55"/>
<dbReference type="OrthoDB" id="5954824at2759"/>
<dbReference type="PhylomeDB" id="Q95V55"/>
<dbReference type="Reactome" id="R-DME-110478">
    <property type="pathway name" value="Insulin signaling pathway"/>
</dbReference>
<dbReference type="Reactome" id="R-DME-1181150">
    <property type="pathway name" value="Signaling by NODAL"/>
</dbReference>
<dbReference type="Reactome" id="R-DME-198693">
    <property type="pathway name" value="AKT phosphorylates targets in the nucleus"/>
</dbReference>
<dbReference type="Reactome" id="R-DME-211163">
    <property type="pathway name" value="AKT-mediated inactivation of FOXO1A"/>
</dbReference>
<dbReference type="Reactome" id="R-DME-5687128">
    <property type="pathway name" value="MAPK6/MAPK4 signaling"/>
</dbReference>
<dbReference type="Reactome" id="R-DME-5689880">
    <property type="pathway name" value="Ub-specific processing proteases"/>
</dbReference>
<dbReference type="Reactome" id="R-DME-9607240">
    <property type="pathway name" value="FLT3 Signaling"/>
</dbReference>
<dbReference type="Reactome" id="R-DME-9614399">
    <property type="pathway name" value="Regulation of localization of FOXO transcription factors"/>
</dbReference>
<dbReference type="Reactome" id="R-DME-9617629">
    <property type="pathway name" value="Regulation of FOXO transcriptional activity by acetylation"/>
</dbReference>
<dbReference type="Reactome" id="R-DME-9617828">
    <property type="pathway name" value="FOXO-mediated transcription of cell cycle genes"/>
</dbReference>
<dbReference type="Reactome" id="R-DME-9634638">
    <property type="pathway name" value="Estrogen-dependent nuclear events downstream of ESR-membrane signaling"/>
</dbReference>
<dbReference type="Reactome" id="R-DME-9841251">
    <property type="pathway name" value="Mitochondrial unfolded protein response (UPRmt)"/>
</dbReference>
<dbReference type="SignaLink" id="Q95V55"/>
<dbReference type="BioGRID-ORCS" id="41709">
    <property type="hits" value="0 hits in 3 CRISPR screens"/>
</dbReference>
<dbReference type="ChiTaRS" id="foxo">
    <property type="organism name" value="fly"/>
</dbReference>
<dbReference type="GenomeRNAi" id="41709"/>
<dbReference type="PRO" id="PR:Q95V55"/>
<dbReference type="Proteomes" id="UP000000803">
    <property type="component" value="Chromosome 3R"/>
</dbReference>
<dbReference type="Bgee" id="FBgn0038197">
    <property type="expression patterns" value="Expressed in hemocyte (sensu Nematoda and Protostomia) in insect leg and 210 other cell types or tissues"/>
</dbReference>
<dbReference type="ExpressionAtlas" id="Q95V55">
    <property type="expression patterns" value="baseline and differential"/>
</dbReference>
<dbReference type="GO" id="GO:0005737">
    <property type="term" value="C:cytoplasm"/>
    <property type="evidence" value="ECO:0000314"/>
    <property type="project" value="UniProtKB"/>
</dbReference>
<dbReference type="GO" id="GO:0005829">
    <property type="term" value="C:cytosol"/>
    <property type="evidence" value="ECO:0000314"/>
    <property type="project" value="FlyBase"/>
</dbReference>
<dbReference type="GO" id="GO:0005634">
    <property type="term" value="C:nucleus"/>
    <property type="evidence" value="ECO:0000314"/>
    <property type="project" value="UniProtKB"/>
</dbReference>
<dbReference type="GO" id="GO:0001228">
    <property type="term" value="F:DNA-binding transcription activator activity, RNA polymerase II-specific"/>
    <property type="evidence" value="ECO:0000314"/>
    <property type="project" value="FlyBase"/>
</dbReference>
<dbReference type="GO" id="GO:0003700">
    <property type="term" value="F:DNA-binding transcription factor activity"/>
    <property type="evidence" value="ECO:0000315"/>
    <property type="project" value="UniProtKB"/>
</dbReference>
<dbReference type="GO" id="GO:0000981">
    <property type="term" value="F:DNA-binding transcription factor activity, RNA polymerase II-specific"/>
    <property type="evidence" value="ECO:0000318"/>
    <property type="project" value="GO_Central"/>
</dbReference>
<dbReference type="GO" id="GO:0000978">
    <property type="term" value="F:RNA polymerase II cis-regulatory region sequence-specific DNA binding"/>
    <property type="evidence" value="ECO:0000318"/>
    <property type="project" value="GO_Central"/>
</dbReference>
<dbReference type="GO" id="GO:0000977">
    <property type="term" value="F:RNA polymerase II transcription regulatory region sequence-specific DNA binding"/>
    <property type="evidence" value="ECO:0000314"/>
    <property type="project" value="FlyBase"/>
</dbReference>
<dbReference type="GO" id="GO:0034198">
    <property type="term" value="P:cellular response to amino acid starvation"/>
    <property type="evidence" value="ECO:0000314"/>
    <property type="project" value="FlyBase"/>
</dbReference>
<dbReference type="GO" id="GO:0034599">
    <property type="term" value="P:cellular response to oxidative stress"/>
    <property type="evidence" value="ECO:0000315"/>
    <property type="project" value="FlyBase"/>
</dbReference>
<dbReference type="GO" id="GO:0009267">
    <property type="term" value="P:cellular response to starvation"/>
    <property type="evidence" value="ECO:0000315"/>
    <property type="project" value="FlyBase"/>
</dbReference>
<dbReference type="GO" id="GO:0007623">
    <property type="term" value="P:circadian rhythm"/>
    <property type="evidence" value="ECO:0000315"/>
    <property type="project" value="FlyBase"/>
</dbReference>
<dbReference type="GO" id="GO:0001745">
    <property type="term" value="P:compound eye morphogenesis"/>
    <property type="evidence" value="ECO:0000315"/>
    <property type="project" value="FlyBase"/>
</dbReference>
<dbReference type="GO" id="GO:0048813">
    <property type="term" value="P:dendrite morphogenesis"/>
    <property type="evidence" value="ECO:0000315"/>
    <property type="project" value="FlyBase"/>
</dbReference>
<dbReference type="GO" id="GO:0008340">
    <property type="term" value="P:determination of adult lifespan"/>
    <property type="evidence" value="ECO:0000315"/>
    <property type="project" value="FlyBase"/>
</dbReference>
<dbReference type="GO" id="GO:0036099">
    <property type="term" value="P:female germ-line stem cell population maintenance"/>
    <property type="evidence" value="ECO:0000315"/>
    <property type="project" value="FlyBase"/>
</dbReference>
<dbReference type="GO" id="GO:0042593">
    <property type="term" value="P:glucose homeostasis"/>
    <property type="evidence" value="ECO:0000315"/>
    <property type="project" value="UniProtKB"/>
</dbReference>
<dbReference type="GO" id="GO:0008286">
    <property type="term" value="P:insulin receptor signaling pathway"/>
    <property type="evidence" value="ECO:0000315"/>
    <property type="project" value="FlyBase"/>
</dbReference>
<dbReference type="GO" id="GO:0045475">
    <property type="term" value="P:locomotor rhythm"/>
    <property type="evidence" value="ECO:0000316"/>
    <property type="project" value="FlyBase"/>
</dbReference>
<dbReference type="GO" id="GO:0048542">
    <property type="term" value="P:lymph gland development"/>
    <property type="evidence" value="ECO:0000315"/>
    <property type="project" value="FlyBase"/>
</dbReference>
<dbReference type="GO" id="GO:0030308">
    <property type="term" value="P:negative regulation of cell growth"/>
    <property type="evidence" value="ECO:0000315"/>
    <property type="project" value="UniProtKB"/>
</dbReference>
<dbReference type="GO" id="GO:0008285">
    <property type="term" value="P:negative regulation of cell population proliferation"/>
    <property type="evidence" value="ECO:0000315"/>
    <property type="project" value="UniProtKB"/>
</dbReference>
<dbReference type="GO" id="GO:0045792">
    <property type="term" value="P:negative regulation of cell size"/>
    <property type="evidence" value="ECO:0000315"/>
    <property type="project" value="FlyBase"/>
</dbReference>
<dbReference type="GO" id="GO:0070345">
    <property type="term" value="P:negative regulation of fat cell proliferation"/>
    <property type="evidence" value="ECO:0000315"/>
    <property type="project" value="FlyBase"/>
</dbReference>
<dbReference type="GO" id="GO:0045824">
    <property type="term" value="P:negative regulation of innate immune response"/>
    <property type="evidence" value="ECO:0000315"/>
    <property type="project" value="FlyBase"/>
</dbReference>
<dbReference type="GO" id="GO:0046627">
    <property type="term" value="P:negative regulation of insulin receptor signaling pathway"/>
    <property type="evidence" value="ECO:0000315"/>
    <property type="project" value="UniProtKB"/>
</dbReference>
<dbReference type="GO" id="GO:0010888">
    <property type="term" value="P:negative regulation of lipid storage"/>
    <property type="evidence" value="ECO:0000314"/>
    <property type="project" value="FlyBase"/>
</dbReference>
<dbReference type="GO" id="GO:0040015">
    <property type="term" value="P:negative regulation of multicellular organism growth"/>
    <property type="evidence" value="ECO:0000315"/>
    <property type="project" value="FlyBase"/>
</dbReference>
<dbReference type="GO" id="GO:0000122">
    <property type="term" value="P:negative regulation of transcription by RNA polymerase II"/>
    <property type="evidence" value="ECO:0000315"/>
    <property type="project" value="FlyBase"/>
</dbReference>
<dbReference type="GO" id="GO:0061045">
    <property type="term" value="P:negative regulation of wound healing"/>
    <property type="evidence" value="ECO:0000315"/>
    <property type="project" value="FlyBase"/>
</dbReference>
<dbReference type="GO" id="GO:0061057">
    <property type="term" value="P:peptidoglycan recognition protein signaling pathway"/>
    <property type="evidence" value="ECO:0000315"/>
    <property type="project" value="FlyBase"/>
</dbReference>
<dbReference type="GO" id="GO:0010508">
    <property type="term" value="P:positive regulation of autophagy"/>
    <property type="evidence" value="ECO:0000315"/>
    <property type="project" value="FlyBase"/>
</dbReference>
<dbReference type="GO" id="GO:0061965">
    <property type="term" value="P:positive regulation of entry into reproductive diapause"/>
    <property type="evidence" value="ECO:0000315"/>
    <property type="project" value="FlyBase"/>
</dbReference>
<dbReference type="GO" id="GO:2000253">
    <property type="term" value="P:positive regulation of feeding behavior"/>
    <property type="evidence" value="ECO:0000315"/>
    <property type="project" value="FlyBase"/>
</dbReference>
<dbReference type="GO" id="GO:2000130">
    <property type="term" value="P:positive regulation of octopamine signaling pathway"/>
    <property type="evidence" value="ECO:0000315"/>
    <property type="project" value="FlyBase"/>
</dbReference>
<dbReference type="GO" id="GO:0045944">
    <property type="term" value="P:positive regulation of transcription by RNA polymerase II"/>
    <property type="evidence" value="ECO:0000314"/>
    <property type="project" value="FlyBase"/>
</dbReference>
<dbReference type="GO" id="GO:0010898">
    <property type="term" value="P:positive regulation of triglyceride catabolic process"/>
    <property type="evidence" value="ECO:0000315"/>
    <property type="project" value="FlyBase"/>
</dbReference>
<dbReference type="GO" id="GO:0010506">
    <property type="term" value="P:regulation of autophagy"/>
    <property type="evidence" value="ECO:0000315"/>
    <property type="project" value="FlyBase"/>
</dbReference>
<dbReference type="GO" id="GO:0006355">
    <property type="term" value="P:regulation of DNA-templated transcription"/>
    <property type="evidence" value="ECO:0000315"/>
    <property type="project" value="UniProtKB"/>
</dbReference>
<dbReference type="GO" id="GO:0040008">
    <property type="term" value="P:regulation of growth"/>
    <property type="evidence" value="ECO:0000316"/>
    <property type="project" value="FlyBase"/>
</dbReference>
<dbReference type="GO" id="GO:0035206">
    <property type="term" value="P:regulation of hemocyte proliferation"/>
    <property type="evidence" value="ECO:0000315"/>
    <property type="project" value="FlyBase"/>
</dbReference>
<dbReference type="GO" id="GO:0019216">
    <property type="term" value="P:regulation of lipid metabolic process"/>
    <property type="evidence" value="ECO:0000315"/>
    <property type="project" value="UniProtKB"/>
</dbReference>
<dbReference type="GO" id="GO:0016241">
    <property type="term" value="P:regulation of macroautophagy"/>
    <property type="evidence" value="ECO:0000315"/>
    <property type="project" value="FlyBase"/>
</dbReference>
<dbReference type="GO" id="GO:0046620">
    <property type="term" value="P:regulation of organ growth"/>
    <property type="evidence" value="ECO:0000315"/>
    <property type="project" value="FlyBase"/>
</dbReference>
<dbReference type="GO" id="GO:0006357">
    <property type="term" value="P:regulation of transcription by RNA polymerase II"/>
    <property type="evidence" value="ECO:0000318"/>
    <property type="project" value="GO_Central"/>
</dbReference>
<dbReference type="GO" id="GO:0009617">
    <property type="term" value="P:response to bacterium"/>
    <property type="evidence" value="ECO:0000314"/>
    <property type="project" value="FlyBase"/>
</dbReference>
<dbReference type="GO" id="GO:0006979">
    <property type="term" value="P:response to oxidative stress"/>
    <property type="evidence" value="ECO:0000315"/>
    <property type="project" value="FlyBase"/>
</dbReference>
<dbReference type="GO" id="GO:0042594">
    <property type="term" value="P:response to starvation"/>
    <property type="evidence" value="ECO:0000314"/>
    <property type="project" value="FlyBase"/>
</dbReference>
<dbReference type="CDD" id="cd20032">
    <property type="entry name" value="FH_FOXO"/>
    <property type="match status" value="1"/>
</dbReference>
<dbReference type="FunFam" id="1.10.10.10:FF:000032">
    <property type="entry name" value="Forkhead box protein O4"/>
    <property type="match status" value="1"/>
</dbReference>
<dbReference type="Gene3D" id="1.10.10.10">
    <property type="entry name" value="Winged helix-like DNA-binding domain superfamily/Winged helix DNA-binding domain"/>
    <property type="match status" value="1"/>
</dbReference>
<dbReference type="InterPro" id="IPR001766">
    <property type="entry name" value="Fork_head_dom"/>
</dbReference>
<dbReference type="InterPro" id="IPR030456">
    <property type="entry name" value="TF_fork_head_CS_2"/>
</dbReference>
<dbReference type="InterPro" id="IPR036388">
    <property type="entry name" value="WH-like_DNA-bd_sf"/>
</dbReference>
<dbReference type="InterPro" id="IPR036390">
    <property type="entry name" value="WH_DNA-bd_sf"/>
</dbReference>
<dbReference type="PANTHER" id="PTHR45767">
    <property type="entry name" value="FORKHEAD BOX PROTEIN O"/>
    <property type="match status" value="1"/>
</dbReference>
<dbReference type="PANTHER" id="PTHR45767:SF2">
    <property type="entry name" value="FORKHEAD BOX PROTEIN O"/>
    <property type="match status" value="1"/>
</dbReference>
<dbReference type="Pfam" id="PF00250">
    <property type="entry name" value="Forkhead"/>
    <property type="match status" value="1"/>
</dbReference>
<dbReference type="PRINTS" id="PR00053">
    <property type="entry name" value="FORKHEAD"/>
</dbReference>
<dbReference type="SMART" id="SM00339">
    <property type="entry name" value="FH"/>
    <property type="match status" value="1"/>
</dbReference>
<dbReference type="SUPFAM" id="SSF46785">
    <property type="entry name" value="Winged helix' DNA-binding domain"/>
    <property type="match status" value="1"/>
</dbReference>
<dbReference type="PROSITE" id="PS00658">
    <property type="entry name" value="FORK_HEAD_2"/>
    <property type="match status" value="1"/>
</dbReference>
<dbReference type="PROSITE" id="PS50039">
    <property type="entry name" value="FORK_HEAD_3"/>
    <property type="match status" value="1"/>
</dbReference>
<proteinExistence type="evidence at protein level"/>
<organism>
    <name type="scientific">Drosophila melanogaster</name>
    <name type="common">Fruit fly</name>
    <dbReference type="NCBI Taxonomy" id="7227"/>
    <lineage>
        <taxon>Eukaryota</taxon>
        <taxon>Metazoa</taxon>
        <taxon>Ecdysozoa</taxon>
        <taxon>Arthropoda</taxon>
        <taxon>Hexapoda</taxon>
        <taxon>Insecta</taxon>
        <taxon>Pterygota</taxon>
        <taxon>Neoptera</taxon>
        <taxon>Endopterygota</taxon>
        <taxon>Diptera</taxon>
        <taxon>Brachycera</taxon>
        <taxon>Muscomorpha</taxon>
        <taxon>Ephydroidea</taxon>
        <taxon>Drosophilidae</taxon>
        <taxon>Drosophila</taxon>
        <taxon>Sophophora</taxon>
    </lineage>
</organism>
<keyword id="KW-0010">Activator</keyword>
<keyword id="KW-0025">Alternative splicing</keyword>
<keyword id="KW-0131">Cell cycle</keyword>
<keyword id="KW-0963">Cytoplasm</keyword>
<keyword id="KW-0217">Developmental protein</keyword>
<keyword id="KW-0221">Differentiation</keyword>
<keyword id="KW-0238">DNA-binding</keyword>
<keyword id="KW-0341">Growth regulation</keyword>
<keyword id="KW-0539">Nucleus</keyword>
<keyword id="KW-0597">Phosphoprotein</keyword>
<keyword id="KW-1185">Reference proteome</keyword>
<keyword id="KW-0804">Transcription</keyword>
<keyword id="KW-0805">Transcription regulation</keyword>
<feature type="chain" id="PRO_0000371436" description="Forkhead box protein O">
    <location>
        <begin position="1"/>
        <end position="613"/>
    </location>
</feature>
<feature type="DNA-binding region" description="Fork-head" evidence="1">
    <location>
        <begin position="95"/>
        <end position="201"/>
    </location>
</feature>
<feature type="region of interest" description="Disordered" evidence="2">
    <location>
        <begin position="39"/>
        <end position="90"/>
    </location>
</feature>
<feature type="region of interest" description="Disordered" evidence="2">
    <location>
        <begin position="182"/>
        <end position="205"/>
    </location>
</feature>
<feature type="region of interest" description="Disordered" evidence="2">
    <location>
        <begin position="217"/>
        <end position="269"/>
    </location>
</feature>
<feature type="region of interest" description="Disordered" evidence="2">
    <location>
        <begin position="317"/>
        <end position="360"/>
    </location>
</feature>
<feature type="compositionally biased region" description="Polar residues" evidence="2">
    <location>
        <begin position="63"/>
        <end position="80"/>
    </location>
</feature>
<feature type="compositionally biased region" description="Low complexity" evidence="2">
    <location>
        <begin position="81"/>
        <end position="90"/>
    </location>
</feature>
<feature type="compositionally biased region" description="Polar residues" evidence="2">
    <location>
        <begin position="221"/>
        <end position="230"/>
    </location>
</feature>
<feature type="compositionally biased region" description="Polar residues" evidence="2">
    <location>
        <begin position="256"/>
        <end position="265"/>
    </location>
</feature>
<feature type="compositionally biased region" description="Pro residues" evidence="2">
    <location>
        <begin position="327"/>
        <end position="336"/>
    </location>
</feature>
<feature type="compositionally biased region" description="Low complexity" evidence="2">
    <location>
        <begin position="337"/>
        <end position="353"/>
    </location>
</feature>
<feature type="modified residue" description="Phosphothreonine; by PKB/AKT1" evidence="5">
    <location>
        <position position="44"/>
    </location>
</feature>
<feature type="modified residue" description="Phosphoserine" evidence="10">
    <location>
        <position position="75"/>
    </location>
</feature>
<feature type="modified residue" description="Phosphoserine; by PKB/AKT1" evidence="5">
    <location>
        <position position="190"/>
    </location>
</feature>
<feature type="modified residue" description="Phosphoserine; by PKB/AKT1" evidence="5">
    <location>
        <position position="259"/>
    </location>
</feature>
<feature type="modified residue" description="Phosphoserine" evidence="10">
    <location>
        <position position="262"/>
    </location>
</feature>
<feature type="modified residue" description="Phosphoserine" evidence="10">
    <location>
        <position position="263"/>
    </location>
</feature>
<feature type="modified residue" description="Phosphoserine" evidence="10">
    <location>
        <position position="268"/>
    </location>
</feature>
<feature type="splice variant" id="VSP_053039" description="In isoform E." evidence="14">
    <original>NSIRHNLSLHNRFMRVQNEGTGKSSWWMLNPEAKPGKSVRRRAASMETSRYEKRRGRAKKRVEALRQAGVVGLNDATPSPSSSVSEGLDHFPESPLHSGGGFQLSPDFRQRASSNASSCGRLSPIRAQDLEPDWGFPVDYQNTTMTQAHAQALEELTGTMADELTLCNQQQQGFSAASGLPSQPPPPPYQPPQHQQAQQQQQQQSPYALNGPASGYNTLQPQSQCLLHRSLNCSCMHNARDGLSPNSVTTTMSPAYPNSEPSSDSLNTYSNVVLDGPADTAALMVQQQQQQQQQQQLSASLE</original>
    <variation>SFAINALLSSDRFSFCLHRSIPPLAVIKDQRLLKNSLRWLRRNRRRLFHLIPETLFFADSALPANFSFFLRRLVVVRWFRGLADRWFGGSVARVFIIENSSSQSGDLAIEPVPKFYELSTNQSECKWQSGMAVDKTWIIGGDPVSATCRDSVSPISRSNGPMKYAYLIRDDSVSWGSNELHTSQSVAAQPLYEGPKRGHRQVILVDAQPGGQARQVCAPPCRFHGDVPVREAARQGQEAGGGTASGGRGGPQRCHALAQQQRQRGAGSLSRESAPQWRWLPIIARFPATRLIQCQFLRTPEPH</variation>
    <location>
        <begin position="146"/>
        <end position="447"/>
    </location>
</feature>
<feature type="splice variant" id="VSP_053040" description="In isoform D." evidence="12">
    <original>NSIRHNLSLHNRFMRVQNEGTGKSSWWMLNPEAKPGKSVRRRAASMETSRYEKRRGRAKKRVEALRQAGVVGLNDATPSPSSSVSEGLDHFPESPLHSGGGFQLSPDFRQRASSNASSCGRLSPIRAQDLEPDWGFPVDYQNTTMTQAHAQALEELTGT</original>
    <variation>DLQILQFFYIQYISVFAKYIYLYVHICFSLVLVTELHTSQSVAAQPLYEGPKRGHRQVILVDAQPGGQARQVCAPPCRFHGDVPVREAARQGQEAGGGTASGGRGGPQRCHALAQQQRQRGAGSLSRESAPQWRWLPIIARFPATRLIQCQFLRTPEPH</variation>
    <location>
        <begin position="146"/>
        <end position="304"/>
    </location>
</feature>
<feature type="splice variant" id="VSP_053041" description="In isoform A." evidence="12">
    <original>NSIRHNLSLHNRFMRVQNEGTGKSSWWMLNPEAKPGKSVRRRAASMETSRYEKRRGRAKKRVEALRQAGVVGLNDATPSPSSSVSEGLDHFPESPLHS</original>
    <variation>SFAINALLSSDRFSFCLHRSIPPLAVIKDQRLLKNSLRWLRRNRRRLFHLIPETLFFADSALPANFSFFLRRLVVVRWFRGLADRWFGGSVARVFIIENSSSQSGDLAIEPVPKFYELSTNQSECKWQSGMAVDKTWIIGGDPVSATCRDSVSPISRSNGPMKYAYLIRDDSVSWGSNELHTSQSVAAQPLYEGPKRGHRQVILVDAQPGGQARQVCAPPCRFHGDVPVREAARQGQEAGGGTASGGRGGPQRCHALAQQQRQRGAGSLSRESAPQVTINCDD</variation>
    <location>
        <begin position="146"/>
        <end position="243"/>
    </location>
</feature>
<feature type="splice variant" id="VSP_053042" description="In isoform D." evidence="12">
    <location>
        <begin position="305"/>
        <end position="613"/>
    </location>
</feature>
<feature type="splice variant" id="VSP_053043" description="In isoform E." evidence="14">
    <location>
        <begin position="448"/>
        <end position="613"/>
    </location>
</feature>
<feature type="mutagenesis site" description="Abolishes phosphorylation; when associated with A-190 and A-259." evidence="5">
    <original>T</original>
    <variation>A</variation>
    <location>
        <position position="44"/>
    </location>
</feature>
<feature type="mutagenesis site" description="Abolishes phosphorylation; when associated with A-44 and A-259." evidence="5">
    <original>S</original>
    <variation>A</variation>
    <location>
        <position position="190"/>
    </location>
</feature>
<feature type="mutagenesis site" description="Abolishes phosphorylation; when associated with A-44 and A-190." evidence="5">
    <original>S</original>
    <variation>A</variation>
    <location>
        <position position="259"/>
    </location>
</feature>
<accession>Q95V55</accession>
<accession>Q7KF42</accession>
<accession>Q95TK1</accession>
<accession>Q9VFN8</accession>
<comment type="function">
    <text evidence="5 6 7 8 9">Transcription factor involved in the regulation of the insulin signaling pathway. Consistently activates both the downstream target Thor\d4EBP and the feedback control target InR. Involved in negative regulation of the cell cycle, modulating cell growth and proliferation. In response to cellular stresses, such as nutrient deprivation or increased levels of reactive oxygen species, foxo is activated and inhibits growth through the action of target genes such as Thor. Foxo activated in the adult fat body can regulate lifespan in adults; an insulin peptide itself may function as one secondary messenger of insulin-regulated aging. Also regulates Lip4, homolog of human acid lipases, thereby acting as a key modulator of lipid metabolism by insulin signaling and integrates insulin responses to glucose and lipid homeostasis.</text>
</comment>
<comment type="subunit">
    <text evidence="8">Interacts with melt.</text>
</comment>
<comment type="interaction">
    <interactant intactId="EBI-500849">
        <id>Q95V55</id>
    </interactant>
    <interactant intactId="EBI-4288282">
        <id>Q8I9J6</id>
        <label>HDAC4</label>
    </interactant>
    <organismsDiffer>false</organismsDiffer>
    <experiments>3</experiments>
</comment>
<comment type="subcellular location">
    <subcellularLocation>
        <location evidence="5 7">Cytoplasm</location>
    </subcellularLocation>
    <subcellularLocation>
        <location evidence="1 5 7">Nucleus</location>
    </subcellularLocation>
    <text evidence="5 7">When phosphorylated, translocated from nucleus to cytoplasm. Dephosphorylation triggers nuclear translocation.</text>
</comment>
<comment type="alternative products">
    <event type="alternative splicing"/>
    <isoform>
        <id>Q95V55-1</id>
        <name evidence="5">B</name>
        <name evidence="3">C</name>
        <sequence type="displayed"/>
    </isoform>
    <isoform>
        <id>Q95V55-2</id>
        <name evidence="3">A</name>
        <sequence type="described" ref="VSP_053041"/>
    </isoform>
    <isoform>
        <id>Q95V55-3</id>
        <name evidence="3">D</name>
        <sequence type="described" ref="VSP_053040 VSP_053042"/>
    </isoform>
    <isoform>
        <id>Q95V55-4</id>
        <name evidence="11">E</name>
        <sequence type="described" ref="VSP_053039 VSP_053043"/>
    </isoform>
</comment>
<comment type="disruption phenotype">
    <text evidence="5">Mutant foxo lacking Akt1 phosphorylation sites no longer responds to insulin inhibition, remains in the nucleus, and is constitutively active, inducing cell arrest.</text>
</comment>
<comment type="sequence caution" evidence="15">
    <conflict type="erroneous initiation">
        <sequence resource="EMBL-CDS" id="AAL13947"/>
    </conflict>
</comment>
<sequence length="613" mass="67413">MMDGYAQEWPRLTHTDNGLAMDQLGGDLPLDVGFEPQTRARSNTWPCPRPENFVEPTDELDSTKASNQQLAPGDSQQAIQNANAAKKNSSRRNAWGNLSYADLITHAIGSATDKRLTLSQIYEWMVQNVPYFKDKGDSNSSAGWKNSIRHNLSLHNRFMRVQNEGTGKSSWWMLNPEAKPGKSVRRRAASMETSRYEKRRGRAKKRVEALRQAGVVGLNDATPSPSSSVSEGLDHFPESPLHSGGGFQLSPDFRQRASSNASSCGRLSPIRAQDLEPDWGFPVDYQNTTMTQAHAQALEELTGTMADELTLCNQQQQGFSAASGLPSQPPPPPYQPPQHQQAQQQQQQQSPYALNGPASGYNTLQPQSQCLLHRSLNCSCMHNARDGLSPNSVTTTMSPAYPNSEPSSDSLNTYSNVVLDGPADTAALMVQQQQQQQQQQQLSASLEGQCLEVLNNEAQPIDEFNLENFPVGNLECNVEELLQQEMSYGGLLDINIPLATVNTNLVNSSSGPLSISNISNLSNISSNSGSSLSLNQLQAQLQQQQQQQQAQQQQQAQQQQQQHQQHQQQLLLNNNNNSSSSLELATQTATTNLNARVQYSQPSVVTSPPSWVH</sequence>
<reference evidence="15 17" key="1">
    <citation type="journal article" date="2003" name="Genes Dev.">
        <title>Control of cell number by Drosophila FOXO: downstream and feedback regulation of the insulin receptor pathway.</title>
        <authorList>
            <person name="Puig O."/>
            <person name="Marr M.T."/>
            <person name="Ruhf M.L."/>
            <person name="Tjian R."/>
        </authorList>
    </citation>
    <scope>NUCLEOTIDE SEQUENCE [MRNA] (ISOFORM B)</scope>
    <scope>FUNCTION</scope>
    <scope>SUBCELLULAR LOCATION</scope>
    <scope>DISRUPTION PHENOTYPE</scope>
    <scope>PHOSPHORYLATION AT THR-44; SER-190 AND SER-259</scope>
    <scope>MUTAGENESIS OF THR-44; SER-190 AND SER-259</scope>
</reference>
<reference evidence="15 16" key="2">
    <citation type="submission" date="2001-09" db="EMBL/GenBank/DDBJ databases">
        <title>A Drosophila FKHR highly expressed in oocyte and early embryo.</title>
        <authorList>
            <person name="Zhang H."/>
        </authorList>
    </citation>
    <scope>NUCLEOTIDE SEQUENCE [MRNA] (ISOFORM E)</scope>
    <source>
        <tissue evidence="11">Oocyte</tissue>
    </source>
</reference>
<reference evidence="19" key="3">
    <citation type="journal article" date="2000" name="Science">
        <title>The genome sequence of Drosophila melanogaster.</title>
        <authorList>
            <person name="Adams M.D."/>
            <person name="Celniker S.E."/>
            <person name="Holt R.A."/>
            <person name="Evans C.A."/>
            <person name="Gocayne J.D."/>
            <person name="Amanatides P.G."/>
            <person name="Scherer S.E."/>
            <person name="Li P.W."/>
            <person name="Hoskins R.A."/>
            <person name="Galle R.F."/>
            <person name="George R.A."/>
            <person name="Lewis S.E."/>
            <person name="Richards S."/>
            <person name="Ashburner M."/>
            <person name="Henderson S.N."/>
            <person name="Sutton G.G."/>
            <person name="Wortman J.R."/>
            <person name="Yandell M.D."/>
            <person name="Zhang Q."/>
            <person name="Chen L.X."/>
            <person name="Brandon R.C."/>
            <person name="Rogers Y.-H.C."/>
            <person name="Blazej R.G."/>
            <person name="Champe M."/>
            <person name="Pfeiffer B.D."/>
            <person name="Wan K.H."/>
            <person name="Doyle C."/>
            <person name="Baxter E.G."/>
            <person name="Helt G."/>
            <person name="Nelson C.R."/>
            <person name="Miklos G.L.G."/>
            <person name="Abril J.F."/>
            <person name="Agbayani A."/>
            <person name="An H.-J."/>
            <person name="Andrews-Pfannkoch C."/>
            <person name="Baldwin D."/>
            <person name="Ballew R.M."/>
            <person name="Basu A."/>
            <person name="Baxendale J."/>
            <person name="Bayraktaroglu L."/>
            <person name="Beasley E.M."/>
            <person name="Beeson K.Y."/>
            <person name="Benos P.V."/>
            <person name="Berman B.P."/>
            <person name="Bhandari D."/>
            <person name="Bolshakov S."/>
            <person name="Borkova D."/>
            <person name="Botchan M.R."/>
            <person name="Bouck J."/>
            <person name="Brokstein P."/>
            <person name="Brottier P."/>
            <person name="Burtis K.C."/>
            <person name="Busam D.A."/>
            <person name="Butler H."/>
            <person name="Cadieu E."/>
            <person name="Center A."/>
            <person name="Chandra I."/>
            <person name="Cherry J.M."/>
            <person name="Cawley S."/>
            <person name="Dahlke C."/>
            <person name="Davenport L.B."/>
            <person name="Davies P."/>
            <person name="de Pablos B."/>
            <person name="Delcher A."/>
            <person name="Deng Z."/>
            <person name="Mays A.D."/>
            <person name="Dew I."/>
            <person name="Dietz S.M."/>
            <person name="Dodson K."/>
            <person name="Doup L.E."/>
            <person name="Downes M."/>
            <person name="Dugan-Rocha S."/>
            <person name="Dunkov B.C."/>
            <person name="Dunn P."/>
            <person name="Durbin K.J."/>
            <person name="Evangelista C.C."/>
            <person name="Ferraz C."/>
            <person name="Ferriera S."/>
            <person name="Fleischmann W."/>
            <person name="Fosler C."/>
            <person name="Gabrielian A.E."/>
            <person name="Garg N.S."/>
            <person name="Gelbart W.M."/>
            <person name="Glasser K."/>
            <person name="Glodek A."/>
            <person name="Gong F."/>
            <person name="Gorrell J.H."/>
            <person name="Gu Z."/>
            <person name="Guan P."/>
            <person name="Harris M."/>
            <person name="Harris N.L."/>
            <person name="Harvey D.A."/>
            <person name="Heiman T.J."/>
            <person name="Hernandez J.R."/>
            <person name="Houck J."/>
            <person name="Hostin D."/>
            <person name="Houston K.A."/>
            <person name="Howland T.J."/>
            <person name="Wei M.-H."/>
            <person name="Ibegwam C."/>
            <person name="Jalali M."/>
            <person name="Kalush F."/>
            <person name="Karpen G.H."/>
            <person name="Ke Z."/>
            <person name="Kennison J.A."/>
            <person name="Ketchum K.A."/>
            <person name="Kimmel B.E."/>
            <person name="Kodira C.D."/>
            <person name="Kraft C.L."/>
            <person name="Kravitz S."/>
            <person name="Kulp D."/>
            <person name="Lai Z."/>
            <person name="Lasko P."/>
            <person name="Lei Y."/>
            <person name="Levitsky A.A."/>
            <person name="Li J.H."/>
            <person name="Li Z."/>
            <person name="Liang Y."/>
            <person name="Lin X."/>
            <person name="Liu X."/>
            <person name="Mattei B."/>
            <person name="McIntosh T.C."/>
            <person name="McLeod M.P."/>
            <person name="McPherson D."/>
            <person name="Merkulov G."/>
            <person name="Milshina N.V."/>
            <person name="Mobarry C."/>
            <person name="Morris J."/>
            <person name="Moshrefi A."/>
            <person name="Mount S.M."/>
            <person name="Moy M."/>
            <person name="Murphy B."/>
            <person name="Murphy L."/>
            <person name="Muzny D.M."/>
            <person name="Nelson D.L."/>
            <person name="Nelson D.R."/>
            <person name="Nelson K.A."/>
            <person name="Nixon K."/>
            <person name="Nusskern D.R."/>
            <person name="Pacleb J.M."/>
            <person name="Palazzolo M."/>
            <person name="Pittman G.S."/>
            <person name="Pan S."/>
            <person name="Pollard J."/>
            <person name="Puri V."/>
            <person name="Reese M.G."/>
            <person name="Reinert K."/>
            <person name="Remington K."/>
            <person name="Saunders R.D.C."/>
            <person name="Scheeler F."/>
            <person name="Shen H."/>
            <person name="Shue B.C."/>
            <person name="Siden-Kiamos I."/>
            <person name="Simpson M."/>
            <person name="Skupski M.P."/>
            <person name="Smith T.J."/>
            <person name="Spier E."/>
            <person name="Spradling A.C."/>
            <person name="Stapleton M."/>
            <person name="Strong R."/>
            <person name="Sun E."/>
            <person name="Svirskas R."/>
            <person name="Tector C."/>
            <person name="Turner R."/>
            <person name="Venter E."/>
            <person name="Wang A.H."/>
            <person name="Wang X."/>
            <person name="Wang Z.-Y."/>
            <person name="Wassarman D.A."/>
            <person name="Weinstock G.M."/>
            <person name="Weissenbach J."/>
            <person name="Williams S.M."/>
            <person name="Woodage T."/>
            <person name="Worley K.C."/>
            <person name="Wu D."/>
            <person name="Yang S."/>
            <person name="Yao Q.A."/>
            <person name="Ye J."/>
            <person name="Yeh R.-F."/>
            <person name="Zaveri J.S."/>
            <person name="Zhan M."/>
            <person name="Zhang G."/>
            <person name="Zhao Q."/>
            <person name="Zheng L."/>
            <person name="Zheng X.H."/>
            <person name="Zhong F.N."/>
            <person name="Zhong W."/>
            <person name="Zhou X."/>
            <person name="Zhu S.C."/>
            <person name="Zhu X."/>
            <person name="Smith H.O."/>
            <person name="Gibbs R.A."/>
            <person name="Myers E.W."/>
            <person name="Rubin G.M."/>
            <person name="Venter J.C."/>
        </authorList>
    </citation>
    <scope>NUCLEOTIDE SEQUENCE [LARGE SCALE GENOMIC DNA]</scope>
    <source>
        <strain>Berkeley</strain>
    </source>
</reference>
<reference evidence="15 19" key="4">
    <citation type="journal article" date="2002" name="Genome Biol.">
        <title>Annotation of the Drosophila melanogaster euchromatic genome: a systematic review.</title>
        <authorList>
            <person name="Misra S."/>
            <person name="Crosby M.A."/>
            <person name="Mungall C.J."/>
            <person name="Matthews B.B."/>
            <person name="Campbell K.S."/>
            <person name="Hradecky P."/>
            <person name="Huang Y."/>
            <person name="Kaminker J.S."/>
            <person name="Millburn G.H."/>
            <person name="Prochnik S.E."/>
            <person name="Smith C.D."/>
            <person name="Tupy J.L."/>
            <person name="Whitfield E.J."/>
            <person name="Bayraktaroglu L."/>
            <person name="Berman B.P."/>
            <person name="Bettencourt B.R."/>
            <person name="Celniker S.E."/>
            <person name="de Grey A.D.N.J."/>
            <person name="Drysdale R.A."/>
            <person name="Harris N.L."/>
            <person name="Richter J."/>
            <person name="Russo S."/>
            <person name="Schroeder A.J."/>
            <person name="Shu S.Q."/>
            <person name="Stapleton M."/>
            <person name="Yamada C."/>
            <person name="Ashburner M."/>
            <person name="Gelbart W.M."/>
            <person name="Rubin G.M."/>
            <person name="Lewis S.E."/>
        </authorList>
    </citation>
    <scope>GENOME REANNOTATION</scope>
    <scope>ALTERNATIVE SPLICING</scope>
    <source>
        <strain>Berkeley</strain>
    </source>
</reference>
<reference evidence="15 18" key="5">
    <citation type="journal article" date="2002" name="Genome Biol.">
        <title>A Drosophila full-length cDNA resource.</title>
        <authorList>
            <person name="Stapleton M."/>
            <person name="Carlson J.W."/>
            <person name="Brokstein P."/>
            <person name="Yu C."/>
            <person name="Champe M."/>
            <person name="George R.A."/>
            <person name="Guarin H."/>
            <person name="Kronmiller B."/>
            <person name="Pacleb J.M."/>
            <person name="Park S."/>
            <person name="Wan K.H."/>
            <person name="Rubin G.M."/>
            <person name="Celniker S.E."/>
        </authorList>
    </citation>
    <scope>NUCLEOTIDE SEQUENCE [LARGE SCALE MRNA] (ISOFORM B)</scope>
    <source>
        <strain evidence="18">Berkeley</strain>
        <tissue evidence="4">Embryo</tissue>
    </source>
</reference>
<reference evidence="15" key="6">
    <citation type="journal article" date="2003" name="J. Biol.">
        <title>The Drosophila forkhead transcription factor FOXO mediates the reduction in cell number associated with reduced insulin signaling.</title>
        <authorList>
            <person name="Juenger M.A."/>
            <person name="Rintelen F."/>
            <person name="Stocker H."/>
            <person name="Wasserman J.D."/>
            <person name="Vegh M."/>
            <person name="Radimerski T."/>
            <person name="Greenberg M.E."/>
            <person name="Hafen E."/>
        </authorList>
    </citation>
    <scope>FUNCTION</scope>
</reference>
<reference evidence="15" key="7">
    <citation type="journal article" date="2004" name="Nature">
        <title>Drosophila dFOXO controls lifespan and regulates insulin signalling in brain and fat body.</title>
        <authorList>
            <person name="Hwangbo D.S."/>
            <person name="Gershman B."/>
            <person name="Tu M.-P."/>
            <person name="Palmer M."/>
            <person name="Tatar M."/>
        </authorList>
    </citation>
    <scope>FUNCTION</scope>
    <scope>SUBCELLULAR LOCATION</scope>
</reference>
<reference evidence="15" key="8">
    <citation type="journal article" date="2005" name="Dev. Cell">
        <title>Drosophila Melted modulates FOXO and TOR activity.</title>
        <authorList>
            <person name="Teleman A.A."/>
            <person name="Chen Y.-W."/>
            <person name="Cohen S.M."/>
        </authorList>
    </citation>
    <scope>FUNCTION</scope>
    <scope>INTERACTION WITH MELT</scope>
</reference>
<reference evidence="15" key="9">
    <citation type="journal article" date="2008" name="J. Mol. Biol.">
        <title>dFOXO regulates transcription of a Drosophila acid lipase.</title>
        <authorList>
            <person name="Vihervaara T."/>
            <person name="Puig O."/>
        </authorList>
    </citation>
    <scope>FUNCTION</scope>
</reference>
<reference evidence="15" key="10">
    <citation type="journal article" date="2008" name="J. Proteome Res.">
        <title>Phosphoproteome analysis of Drosophila melanogaster embryos.</title>
        <authorList>
            <person name="Zhai B."/>
            <person name="Villen J."/>
            <person name="Beausoleil S.A."/>
            <person name="Mintseris J."/>
            <person name="Gygi S.P."/>
        </authorList>
    </citation>
    <scope>PHOSPHORYLATION [LARGE SCALE ANALYSIS] AT SER-75; SER-262; SER-263 AND SER-268</scope>
    <scope>IDENTIFICATION BY MASS SPECTROMETRY</scope>
    <source>
        <tissue evidence="10">Embryo</tissue>
    </source>
</reference>
<protein>
    <recommendedName>
        <fullName evidence="13">Forkhead box protein O</fullName>
        <shortName evidence="13">dFOXO</shortName>
    </recommendedName>
    <alternativeName>
        <fullName>Protein FKHR</fullName>
    </alternativeName>
</protein>